<name>RECF_LACJO</name>
<sequence>MYLANFELKDFRNFEELKINFDPHVNIFIGPNAQGKTNLLEAIYFLALTRSHRTNSDKELIRFGSKFAGLQGKVHKSQLEVELKLRLTPNGKKAWVNRLEQKKLSAYVGQMNAILFSPEDLALVKGAPSIRRRFMDLEFGQINSEYLYFLSQYRQVLQQRNNYLKQLSIKKANDLVFLDVLSDQLAGIAAEIISRRIKYIKKLNSYAQSAHSEISGQAEKLQIFYRPSVKEITPDDDVETIYQKVITSYKKNRPNEIRKGTTLSGPHRDDLDFLINDKNAHDFASQGQQRTISLSVKLAEIQLVHELTQEYPILLLDDVMSELDHRRQSSLLNYIHGKTQTFITTTDLEGISWEIVKEPKVYHISAGTISTKES</sequence>
<proteinExistence type="inferred from homology"/>
<keyword id="KW-0067">ATP-binding</keyword>
<keyword id="KW-0963">Cytoplasm</keyword>
<keyword id="KW-0227">DNA damage</keyword>
<keyword id="KW-0234">DNA repair</keyword>
<keyword id="KW-0235">DNA replication</keyword>
<keyword id="KW-0238">DNA-binding</keyword>
<keyword id="KW-0547">Nucleotide-binding</keyword>
<keyword id="KW-0742">SOS response</keyword>
<evidence type="ECO:0000255" key="1">
    <source>
        <dbReference type="HAMAP-Rule" id="MF_00365"/>
    </source>
</evidence>
<gene>
    <name evidence="1" type="primary">recF</name>
    <name type="ordered locus">LJ_0003</name>
</gene>
<feature type="chain" id="PRO_0000196421" description="DNA replication and repair protein RecF">
    <location>
        <begin position="1"/>
        <end position="374"/>
    </location>
</feature>
<feature type="binding site" evidence="1">
    <location>
        <begin position="30"/>
        <end position="37"/>
    </location>
    <ligand>
        <name>ATP</name>
        <dbReference type="ChEBI" id="CHEBI:30616"/>
    </ligand>
</feature>
<dbReference type="EMBL" id="AE017198">
    <property type="protein sequence ID" value="AAS07984.1"/>
    <property type="molecule type" value="Genomic_DNA"/>
</dbReference>
<dbReference type="RefSeq" id="WP_004898281.1">
    <property type="nucleotide sequence ID" value="NC_005362.1"/>
</dbReference>
<dbReference type="SMR" id="Q74M31"/>
<dbReference type="GeneID" id="83569439"/>
<dbReference type="KEGG" id="ljo:LJ_0003"/>
<dbReference type="eggNOG" id="COG1195">
    <property type="taxonomic scope" value="Bacteria"/>
</dbReference>
<dbReference type="HOGENOM" id="CLU_040267_0_1_9"/>
<dbReference type="Proteomes" id="UP000000581">
    <property type="component" value="Chromosome"/>
</dbReference>
<dbReference type="GO" id="GO:0005737">
    <property type="term" value="C:cytoplasm"/>
    <property type="evidence" value="ECO:0007669"/>
    <property type="project" value="UniProtKB-SubCell"/>
</dbReference>
<dbReference type="GO" id="GO:0005524">
    <property type="term" value="F:ATP binding"/>
    <property type="evidence" value="ECO:0007669"/>
    <property type="project" value="UniProtKB-UniRule"/>
</dbReference>
<dbReference type="GO" id="GO:0003697">
    <property type="term" value="F:single-stranded DNA binding"/>
    <property type="evidence" value="ECO:0007669"/>
    <property type="project" value="UniProtKB-UniRule"/>
</dbReference>
<dbReference type="GO" id="GO:0006260">
    <property type="term" value="P:DNA replication"/>
    <property type="evidence" value="ECO:0007669"/>
    <property type="project" value="UniProtKB-UniRule"/>
</dbReference>
<dbReference type="GO" id="GO:0000731">
    <property type="term" value="P:DNA synthesis involved in DNA repair"/>
    <property type="evidence" value="ECO:0007669"/>
    <property type="project" value="TreeGrafter"/>
</dbReference>
<dbReference type="GO" id="GO:0006302">
    <property type="term" value="P:double-strand break repair"/>
    <property type="evidence" value="ECO:0007669"/>
    <property type="project" value="TreeGrafter"/>
</dbReference>
<dbReference type="GO" id="GO:0009432">
    <property type="term" value="P:SOS response"/>
    <property type="evidence" value="ECO:0007669"/>
    <property type="project" value="UniProtKB-UniRule"/>
</dbReference>
<dbReference type="CDD" id="cd03242">
    <property type="entry name" value="ABC_RecF"/>
    <property type="match status" value="1"/>
</dbReference>
<dbReference type="Gene3D" id="3.40.50.300">
    <property type="entry name" value="P-loop containing nucleotide triphosphate hydrolases"/>
    <property type="match status" value="1"/>
</dbReference>
<dbReference type="Gene3D" id="1.20.1050.90">
    <property type="entry name" value="RecF/RecN/SMC, N-terminal domain"/>
    <property type="match status" value="1"/>
</dbReference>
<dbReference type="HAMAP" id="MF_00365">
    <property type="entry name" value="RecF"/>
    <property type="match status" value="1"/>
</dbReference>
<dbReference type="InterPro" id="IPR001238">
    <property type="entry name" value="DNA-binding_RecF"/>
</dbReference>
<dbReference type="InterPro" id="IPR018078">
    <property type="entry name" value="DNA-binding_RecF_CS"/>
</dbReference>
<dbReference type="InterPro" id="IPR027417">
    <property type="entry name" value="P-loop_NTPase"/>
</dbReference>
<dbReference type="InterPro" id="IPR003395">
    <property type="entry name" value="RecF/RecN/SMC_N"/>
</dbReference>
<dbReference type="InterPro" id="IPR042174">
    <property type="entry name" value="RecF_2"/>
</dbReference>
<dbReference type="NCBIfam" id="TIGR00611">
    <property type="entry name" value="recf"/>
    <property type="match status" value="1"/>
</dbReference>
<dbReference type="PANTHER" id="PTHR32182">
    <property type="entry name" value="DNA REPLICATION AND REPAIR PROTEIN RECF"/>
    <property type="match status" value="1"/>
</dbReference>
<dbReference type="PANTHER" id="PTHR32182:SF0">
    <property type="entry name" value="DNA REPLICATION AND REPAIR PROTEIN RECF"/>
    <property type="match status" value="1"/>
</dbReference>
<dbReference type="Pfam" id="PF02463">
    <property type="entry name" value="SMC_N"/>
    <property type="match status" value="1"/>
</dbReference>
<dbReference type="SUPFAM" id="SSF52540">
    <property type="entry name" value="P-loop containing nucleoside triphosphate hydrolases"/>
    <property type="match status" value="1"/>
</dbReference>
<dbReference type="PROSITE" id="PS00617">
    <property type="entry name" value="RECF_1"/>
    <property type="match status" value="1"/>
</dbReference>
<dbReference type="PROSITE" id="PS00618">
    <property type="entry name" value="RECF_2"/>
    <property type="match status" value="1"/>
</dbReference>
<comment type="function">
    <text evidence="1">The RecF protein is involved in DNA metabolism; it is required for DNA replication and normal SOS inducibility. RecF binds preferentially to single-stranded, linear DNA. It also seems to bind ATP.</text>
</comment>
<comment type="subcellular location">
    <subcellularLocation>
        <location evidence="1">Cytoplasm</location>
    </subcellularLocation>
</comment>
<comment type="similarity">
    <text evidence="1">Belongs to the RecF family.</text>
</comment>
<accession>Q74M31</accession>
<reference key="1">
    <citation type="journal article" date="2004" name="Proc. Natl. Acad. Sci. U.S.A.">
        <title>The genome sequence of the probiotic intestinal bacterium Lactobacillus johnsonii NCC 533.</title>
        <authorList>
            <person name="Pridmore R.D."/>
            <person name="Berger B."/>
            <person name="Desiere F."/>
            <person name="Vilanova D."/>
            <person name="Barretto C."/>
            <person name="Pittet A.-C."/>
            <person name="Zwahlen M.-C."/>
            <person name="Rouvet M."/>
            <person name="Altermann E."/>
            <person name="Barrangou R."/>
            <person name="Mollet B."/>
            <person name="Mercenier A."/>
            <person name="Klaenhammer T."/>
            <person name="Arigoni F."/>
            <person name="Schell M.A."/>
        </authorList>
    </citation>
    <scope>NUCLEOTIDE SEQUENCE [LARGE SCALE GENOMIC DNA]</scope>
    <source>
        <strain>CNCM I-1225 / La1 / NCC 533</strain>
    </source>
</reference>
<organism>
    <name type="scientific">Lactobacillus johnsonii (strain CNCM I-12250 / La1 / NCC 533)</name>
    <dbReference type="NCBI Taxonomy" id="257314"/>
    <lineage>
        <taxon>Bacteria</taxon>
        <taxon>Bacillati</taxon>
        <taxon>Bacillota</taxon>
        <taxon>Bacilli</taxon>
        <taxon>Lactobacillales</taxon>
        <taxon>Lactobacillaceae</taxon>
        <taxon>Lactobacillus</taxon>
    </lineage>
</organism>
<protein>
    <recommendedName>
        <fullName evidence="1">DNA replication and repair protein RecF</fullName>
    </recommendedName>
</protein>